<sequence length="586" mass="67689">MFIEYSRLPGFESINISFSRGMLRLAKFTNFATYKQKLEYFRLLAGSNKYIQRISVADFERHPDEINYIYIILISILQMEECMPVLVLCPTVYWVRFHWPGKCSVNSLNFTNETLKSAFHAVFTPYFALMKKVLGRIKNNMLLFAEPHANLNNLFVKHFHDLIYKSVKDEKTGEAILYLRTNVNVPNVFIDDKRAVFHGDGMKIGKFTGKFLCFSFKRTIRWSKLDSVDSFAVTTVNYRVSVNWEKTPRKTFLSLDSDTKNLHYISKKILNKKGKNATTSKTTKSSCTSENVCDDKTFSVEFPLTTSAKTEYLLRSNFSLEKINESNNPTLQELTLNRTHRLYRSNFRNEQSTTQRKFEKIGRTVSTDSGNKLLTFPEQKATRDSNPFSIELTHATVISSDESALKDTTNQAIAEMQRITPAIAKTISRRTANWVCSNPAPDPYGEPSTWSRILTPNLKIISESSPYYPVHLASPNSTFSRDQSVRSVVMRRSSVCVEKQNSFFRNYEHFKNILSRRTIKVKTSCPRLSVDVSDNKRENLSQEHLILPNKSREKVNRFKNCLHRVAEALRAAKENWDQHNPRNSIH</sequence>
<comment type="induction">
    <text evidence="1">During anaerobic conditions.</text>
</comment>
<feature type="chain" id="PRO_0000245270" description="Uncharacterized protein IRC10">
    <location>
        <begin position="1"/>
        <end position="586"/>
    </location>
</feature>
<name>IRC10_YEAST</name>
<protein>
    <recommendedName>
        <fullName>Uncharacterized protein IRC10</fullName>
    </recommendedName>
    <alternativeName>
        <fullName>Increased recombination centers protein 10</fullName>
    </alternativeName>
</protein>
<evidence type="ECO:0000269" key="1">
    <source>
    </source>
</evidence>
<proteinExistence type="evidence at transcript level"/>
<reference key="1">
    <citation type="journal article" date="1997" name="Nature">
        <title>The nucleotide sequence of Saccharomyces cerevisiae chromosome XV.</title>
        <authorList>
            <person name="Dujon B."/>
            <person name="Albermann K."/>
            <person name="Aldea M."/>
            <person name="Alexandraki D."/>
            <person name="Ansorge W."/>
            <person name="Arino J."/>
            <person name="Benes V."/>
            <person name="Bohn C."/>
            <person name="Bolotin-Fukuhara M."/>
            <person name="Bordonne R."/>
            <person name="Boyer J."/>
            <person name="Camasses A."/>
            <person name="Casamayor A."/>
            <person name="Casas C."/>
            <person name="Cheret G."/>
            <person name="Cziepluch C."/>
            <person name="Daignan-Fornier B."/>
            <person name="Dang V.-D."/>
            <person name="de Haan M."/>
            <person name="Delius H."/>
            <person name="Durand P."/>
            <person name="Fairhead C."/>
            <person name="Feldmann H."/>
            <person name="Gaillon L."/>
            <person name="Galisson F."/>
            <person name="Gamo F.-J."/>
            <person name="Gancedo C."/>
            <person name="Goffeau A."/>
            <person name="Goulding S.E."/>
            <person name="Grivell L.A."/>
            <person name="Habbig B."/>
            <person name="Hand N.J."/>
            <person name="Hani J."/>
            <person name="Hattenhorst U."/>
            <person name="Hebling U."/>
            <person name="Hernando Y."/>
            <person name="Herrero E."/>
            <person name="Heumann K."/>
            <person name="Hiesel R."/>
            <person name="Hilger F."/>
            <person name="Hofmann B."/>
            <person name="Hollenberg C.P."/>
            <person name="Hughes B."/>
            <person name="Jauniaux J.-C."/>
            <person name="Kalogeropoulos A."/>
            <person name="Katsoulou C."/>
            <person name="Kordes E."/>
            <person name="Lafuente M.J."/>
            <person name="Landt O."/>
            <person name="Louis E.J."/>
            <person name="Maarse A.C."/>
            <person name="Madania A."/>
            <person name="Mannhaupt G."/>
            <person name="Marck C."/>
            <person name="Martin R.P."/>
            <person name="Mewes H.-W."/>
            <person name="Michaux G."/>
            <person name="Paces V."/>
            <person name="Parle-McDermott A.G."/>
            <person name="Pearson B.M."/>
            <person name="Perrin A."/>
            <person name="Pettersson B."/>
            <person name="Poch O."/>
            <person name="Pohl T.M."/>
            <person name="Poirey R."/>
            <person name="Portetelle D."/>
            <person name="Pujol A."/>
            <person name="Purnelle B."/>
            <person name="Ramezani Rad M."/>
            <person name="Rechmann S."/>
            <person name="Schwager C."/>
            <person name="Schweizer M."/>
            <person name="Sor F."/>
            <person name="Sterky F."/>
            <person name="Tarassov I.A."/>
            <person name="Teodoru C."/>
            <person name="Tettelin H."/>
            <person name="Thierry A."/>
            <person name="Tobiasch E."/>
            <person name="Tzermia M."/>
            <person name="Uhlen M."/>
            <person name="Unseld M."/>
            <person name="Valens M."/>
            <person name="Vandenbol M."/>
            <person name="Vetter I."/>
            <person name="Vlcek C."/>
            <person name="Voet M."/>
            <person name="Volckaert G."/>
            <person name="Voss H."/>
            <person name="Wambutt R."/>
            <person name="Wedler H."/>
            <person name="Wiemann S."/>
            <person name="Winsor B."/>
            <person name="Wolfe K.H."/>
            <person name="Zollner A."/>
            <person name="Zumstein E."/>
            <person name="Kleine K."/>
        </authorList>
    </citation>
    <scope>NUCLEOTIDE SEQUENCE [LARGE SCALE GENOMIC DNA]</scope>
    <source>
        <strain>ATCC 204508 / S288c</strain>
    </source>
</reference>
<reference key="2">
    <citation type="journal article" date="2014" name="G3 (Bethesda)">
        <title>The reference genome sequence of Saccharomyces cerevisiae: Then and now.</title>
        <authorList>
            <person name="Engel S.R."/>
            <person name="Dietrich F.S."/>
            <person name="Fisk D.G."/>
            <person name="Binkley G."/>
            <person name="Balakrishnan R."/>
            <person name="Costanzo M.C."/>
            <person name="Dwight S.S."/>
            <person name="Hitz B.C."/>
            <person name="Karra K."/>
            <person name="Nash R.S."/>
            <person name="Weng S."/>
            <person name="Wong E.D."/>
            <person name="Lloyd P."/>
            <person name="Skrzypek M.S."/>
            <person name="Miyasato S.R."/>
            <person name="Simison M."/>
            <person name="Cherry J.M."/>
        </authorList>
    </citation>
    <scope>GENOME REANNOTATION</scope>
    <source>
        <strain>ATCC 204508 / S288c</strain>
    </source>
</reference>
<reference key="3">
    <citation type="journal article" date="1999" name="J. Bacteriol.">
        <title>Genome-wide transcriptional analysis of aerobic and anaerobic chemostat cultures of Saccharomyces cerevisiae.</title>
        <authorList>
            <person name="ter Linde J.J.M."/>
            <person name="Liang H."/>
            <person name="Davis R.W."/>
            <person name="Steensma H.Y."/>
            <person name="van Dijken J.P."/>
            <person name="Pronk J.T."/>
        </authorList>
    </citation>
    <scope>INDUCTION</scope>
</reference>
<dbReference type="EMBL" id="Z74757">
    <property type="protein sequence ID" value="CAA99014.1"/>
    <property type="molecule type" value="Genomic_DNA"/>
</dbReference>
<dbReference type="EMBL" id="BK006948">
    <property type="protein sequence ID" value="DAA10767.1"/>
    <property type="molecule type" value="Genomic_DNA"/>
</dbReference>
<dbReference type="PIR" id="S66697">
    <property type="entry name" value="S66697"/>
</dbReference>
<dbReference type="RefSeq" id="NP_014627.1">
    <property type="nucleotide sequence ID" value="NM_001183269.1"/>
</dbReference>
<dbReference type="SMR" id="Q08118"/>
<dbReference type="BioGRID" id="34388">
    <property type="interactions" value="38"/>
</dbReference>
<dbReference type="DIP" id="DIP-4245N"/>
<dbReference type="FunCoup" id="Q08118">
    <property type="interactions" value="29"/>
</dbReference>
<dbReference type="STRING" id="4932.YOL015W"/>
<dbReference type="iPTMnet" id="Q08118"/>
<dbReference type="PaxDb" id="4932-YOL015W"/>
<dbReference type="PeptideAtlas" id="Q08118"/>
<dbReference type="EnsemblFungi" id="YOL015W_mRNA">
    <property type="protein sequence ID" value="YOL015W"/>
    <property type="gene ID" value="YOL015W"/>
</dbReference>
<dbReference type="GeneID" id="854145"/>
<dbReference type="KEGG" id="sce:YOL015W"/>
<dbReference type="AGR" id="SGD:S000005375"/>
<dbReference type="SGD" id="S000005375">
    <property type="gene designation" value="IRC10"/>
</dbReference>
<dbReference type="VEuPathDB" id="FungiDB:YOL015W"/>
<dbReference type="HOGENOM" id="CLU_465558_0_0_1"/>
<dbReference type="InParanoid" id="Q08118"/>
<dbReference type="OrthoDB" id="4055616at2759"/>
<dbReference type="BioCyc" id="YEAST:G3O-33431-MONOMER"/>
<dbReference type="BioGRID-ORCS" id="854145">
    <property type="hits" value="0 hits in 10 CRISPR screens"/>
</dbReference>
<dbReference type="PRO" id="PR:Q08118"/>
<dbReference type="Proteomes" id="UP000002311">
    <property type="component" value="Chromosome XV"/>
</dbReference>
<dbReference type="RNAct" id="Q08118">
    <property type="molecule type" value="protein"/>
</dbReference>
<dbReference type="GO" id="GO:0070056">
    <property type="term" value="C:prospore membrane leading edge"/>
    <property type="evidence" value="ECO:0007005"/>
    <property type="project" value="SGD"/>
</dbReference>
<organism>
    <name type="scientific">Saccharomyces cerevisiae (strain ATCC 204508 / S288c)</name>
    <name type="common">Baker's yeast</name>
    <dbReference type="NCBI Taxonomy" id="559292"/>
    <lineage>
        <taxon>Eukaryota</taxon>
        <taxon>Fungi</taxon>
        <taxon>Dikarya</taxon>
        <taxon>Ascomycota</taxon>
        <taxon>Saccharomycotina</taxon>
        <taxon>Saccharomycetes</taxon>
        <taxon>Saccharomycetales</taxon>
        <taxon>Saccharomycetaceae</taxon>
        <taxon>Saccharomyces</taxon>
    </lineage>
</organism>
<keyword id="KW-1185">Reference proteome</keyword>
<accession>Q08118</accession>
<accession>D6W251</accession>
<gene>
    <name type="primary">IRC10</name>
    <name type="ordered locus">YOL015W</name>
</gene>